<gene>
    <name type="ordered locus">Rv1101c</name>
    <name type="ORF">MTV017.54c</name>
</gene>
<reference key="1">
    <citation type="journal article" date="1998" name="Nature">
        <title>Deciphering the biology of Mycobacterium tuberculosis from the complete genome sequence.</title>
        <authorList>
            <person name="Cole S.T."/>
            <person name="Brosch R."/>
            <person name="Parkhill J."/>
            <person name="Garnier T."/>
            <person name="Churcher C.M."/>
            <person name="Harris D.E."/>
            <person name="Gordon S.V."/>
            <person name="Eiglmeier K."/>
            <person name="Gas S."/>
            <person name="Barry C.E. III"/>
            <person name="Tekaia F."/>
            <person name="Badcock K."/>
            <person name="Basham D."/>
            <person name="Brown D."/>
            <person name="Chillingworth T."/>
            <person name="Connor R."/>
            <person name="Davies R.M."/>
            <person name="Devlin K."/>
            <person name="Feltwell T."/>
            <person name="Gentles S."/>
            <person name="Hamlin N."/>
            <person name="Holroyd S."/>
            <person name="Hornsby T."/>
            <person name="Jagels K."/>
            <person name="Krogh A."/>
            <person name="McLean J."/>
            <person name="Moule S."/>
            <person name="Murphy L.D."/>
            <person name="Oliver S."/>
            <person name="Osborne J."/>
            <person name="Quail M.A."/>
            <person name="Rajandream M.A."/>
            <person name="Rogers J."/>
            <person name="Rutter S."/>
            <person name="Seeger K."/>
            <person name="Skelton S."/>
            <person name="Squares S."/>
            <person name="Squares R."/>
            <person name="Sulston J.E."/>
            <person name="Taylor K."/>
            <person name="Whitehead S."/>
            <person name="Barrell B.G."/>
        </authorList>
    </citation>
    <scope>NUCLEOTIDE SEQUENCE [LARGE SCALE GENOMIC DNA]</scope>
    <source>
        <strain>ATCC 25618 / H37Rv</strain>
    </source>
</reference>
<reference key="2">
    <citation type="journal article" date="2011" name="Mol. Cell. Proteomics">
        <title>Proteogenomic analysis of Mycobacterium tuberculosis by high resolution mass spectrometry.</title>
        <authorList>
            <person name="Kelkar D.S."/>
            <person name="Kumar D."/>
            <person name="Kumar P."/>
            <person name="Balakrishnan L."/>
            <person name="Muthusamy B."/>
            <person name="Yadav A.K."/>
            <person name="Shrivastava P."/>
            <person name="Marimuthu A."/>
            <person name="Anand S."/>
            <person name="Sundaram H."/>
            <person name="Kingsbury R."/>
            <person name="Harsha H.C."/>
            <person name="Nair B."/>
            <person name="Prasad T.S."/>
            <person name="Chauhan D.S."/>
            <person name="Katoch K."/>
            <person name="Katoch V.M."/>
            <person name="Kumar P."/>
            <person name="Chaerkady R."/>
            <person name="Ramachandran S."/>
            <person name="Dash D."/>
            <person name="Pandey A."/>
        </authorList>
    </citation>
    <scope>IDENTIFICATION BY MASS SPECTROMETRY [LARGE SCALE ANALYSIS]</scope>
    <source>
        <strain>ATCC 25618 / H37Rv</strain>
    </source>
</reference>
<organism>
    <name type="scientific">Mycobacterium tuberculosis (strain ATCC 25618 / H37Rv)</name>
    <dbReference type="NCBI Taxonomy" id="83332"/>
    <lineage>
        <taxon>Bacteria</taxon>
        <taxon>Bacillati</taxon>
        <taxon>Actinomycetota</taxon>
        <taxon>Actinomycetes</taxon>
        <taxon>Mycobacteriales</taxon>
        <taxon>Mycobacteriaceae</taxon>
        <taxon>Mycobacterium</taxon>
        <taxon>Mycobacterium tuberculosis complex</taxon>
    </lineage>
</organism>
<name>Y1101_MYCTU</name>
<comment type="subcellular location">
    <subcellularLocation>
        <location evidence="2">Cell membrane</location>
        <topology evidence="2">Multi-pass membrane protein</topology>
    </subcellularLocation>
</comment>
<comment type="similarity">
    <text evidence="2">Belongs to the autoinducer-2 exporter (AI-2E) (TC 2.A.86) family.</text>
</comment>
<proteinExistence type="evidence at protein level"/>
<keyword id="KW-1003">Cell membrane</keyword>
<keyword id="KW-0472">Membrane</keyword>
<keyword id="KW-1185">Reference proteome</keyword>
<keyword id="KW-0812">Transmembrane</keyword>
<keyword id="KW-1133">Transmembrane helix</keyword>
<keyword id="KW-0813">Transport</keyword>
<accession>P9WFM3</accession>
<accession>L0T7A7</accession>
<accession>O53449</accession>
<evidence type="ECO:0000255" key="1"/>
<evidence type="ECO:0000305" key="2"/>
<feature type="chain" id="PRO_0000148318" description="Putative transport protein Rv1101c">
    <location>
        <begin position="1"/>
        <end position="385"/>
    </location>
</feature>
<feature type="transmembrane region" description="Helical" evidence="1">
    <location>
        <begin position="7"/>
        <end position="27"/>
    </location>
</feature>
<feature type="transmembrane region" description="Helical" evidence="1">
    <location>
        <begin position="32"/>
        <end position="52"/>
    </location>
</feature>
<feature type="transmembrane region" description="Helical" evidence="1">
    <location>
        <begin position="66"/>
        <end position="86"/>
    </location>
</feature>
<feature type="transmembrane region" description="Helical" evidence="1">
    <location>
        <begin position="159"/>
        <end position="179"/>
    </location>
</feature>
<feature type="transmembrane region" description="Helical" evidence="1">
    <location>
        <begin position="218"/>
        <end position="238"/>
    </location>
</feature>
<feature type="transmembrane region" description="Helical" evidence="1">
    <location>
        <begin position="241"/>
        <end position="261"/>
    </location>
</feature>
<feature type="transmembrane region" description="Helical" evidence="1">
    <location>
        <begin position="263"/>
        <end position="283"/>
    </location>
</feature>
<feature type="transmembrane region" description="Helical" evidence="1">
    <location>
        <begin position="319"/>
        <end position="339"/>
    </location>
</feature>
<sequence>MNTEFTLTQKRALAILTLIALLFGAYFLRNYFVLIVVAAVGAYLFTPLFKWFTKRFNTGLSAACTLLSALAAVVVPVGALVGLAIVQIARMVDSVADWVRTTDLSTLGDKILQFVNGLFDRVPFLHITVTADALRKAMISVAQNVGEWLLHFLRDAAGSLAGVITSAIIFVYVFVALLVNREKLRTLIGQLNPLGEDVTDLYLQKMGSMVRGTVNGQFVIAACQGVAGAASIYIAGFHHGFFIFAIVLTALSIIPLGGGIVTIPFGIGMIFYGNIAGGIFVLLWHLLVVTNIDNVLRPILVPRDARLNSALMLLSVFAGITMFGPWGIIIGPVLMILIVTTIDVYLAVYKGVELEQFEAPPVRRRWLPRRGPATSRNAPPPSTAE</sequence>
<protein>
    <recommendedName>
        <fullName>Putative transport protein Rv1101c</fullName>
    </recommendedName>
</protein>
<dbReference type="EMBL" id="AL123456">
    <property type="protein sequence ID" value="CCP43854.1"/>
    <property type="molecule type" value="Genomic_DNA"/>
</dbReference>
<dbReference type="PIR" id="C70897">
    <property type="entry name" value="C70897"/>
</dbReference>
<dbReference type="RefSeq" id="NP_215617.1">
    <property type="nucleotide sequence ID" value="NC_000962.3"/>
</dbReference>
<dbReference type="RefSeq" id="WP_003898727.1">
    <property type="nucleotide sequence ID" value="NZ_NVQJ01000021.1"/>
</dbReference>
<dbReference type="SMR" id="P9WFM3"/>
<dbReference type="STRING" id="83332.Rv1101c"/>
<dbReference type="PaxDb" id="83332-Rv1101c"/>
<dbReference type="DNASU" id="885482"/>
<dbReference type="GeneID" id="885482"/>
<dbReference type="KEGG" id="mtu:Rv1101c"/>
<dbReference type="KEGG" id="mtv:RVBD_1101c"/>
<dbReference type="TubercuList" id="Rv1101c"/>
<dbReference type="eggNOG" id="COG0628">
    <property type="taxonomic scope" value="Bacteria"/>
</dbReference>
<dbReference type="InParanoid" id="P9WFM3"/>
<dbReference type="OrthoDB" id="5348369at2"/>
<dbReference type="PhylomeDB" id="P9WFM3"/>
<dbReference type="Proteomes" id="UP000001584">
    <property type="component" value="Chromosome"/>
</dbReference>
<dbReference type="GO" id="GO:0005886">
    <property type="term" value="C:plasma membrane"/>
    <property type="evidence" value="ECO:0007005"/>
    <property type="project" value="MTBBASE"/>
</dbReference>
<dbReference type="InterPro" id="IPR002549">
    <property type="entry name" value="AI-2E-like"/>
</dbReference>
<dbReference type="PANTHER" id="PTHR21716">
    <property type="entry name" value="TRANSMEMBRANE PROTEIN"/>
    <property type="match status" value="1"/>
</dbReference>
<dbReference type="PANTHER" id="PTHR21716:SF4">
    <property type="entry name" value="TRANSMEMBRANE PROTEIN 245"/>
    <property type="match status" value="1"/>
</dbReference>
<dbReference type="Pfam" id="PF01594">
    <property type="entry name" value="AI-2E_transport"/>
    <property type="match status" value="1"/>
</dbReference>